<protein>
    <recommendedName>
        <fullName evidence="1">LPS-assembly lipoprotein LptE</fullName>
    </recommendedName>
</protein>
<keyword id="KW-0998">Cell outer membrane</keyword>
<keyword id="KW-0449">Lipoprotein</keyword>
<keyword id="KW-0472">Membrane</keyword>
<keyword id="KW-0564">Palmitate</keyword>
<keyword id="KW-0732">Signal</keyword>
<name>LPTE_SALDC</name>
<comment type="function">
    <text evidence="1">Together with LptD, is involved in the assembly of lipopolysaccharide (LPS) at the surface of the outer membrane. Required for the proper assembly of LptD. Binds LPS and may serve as the LPS recognition site at the outer membrane.</text>
</comment>
<comment type="subunit">
    <text evidence="1">Component of the lipopolysaccharide transport and assembly complex. Interacts with LptD.</text>
</comment>
<comment type="subcellular location">
    <subcellularLocation>
        <location evidence="1">Cell outer membrane</location>
        <topology evidence="1">Lipid-anchor</topology>
    </subcellularLocation>
</comment>
<comment type="similarity">
    <text evidence="1">Belongs to the LptE lipoprotein family.</text>
</comment>
<gene>
    <name evidence="1" type="primary">lptE</name>
    <name type="synonym">rlpB</name>
    <name type="ordered locus">SeD_A0750</name>
</gene>
<evidence type="ECO:0000255" key="1">
    <source>
        <dbReference type="HAMAP-Rule" id="MF_01186"/>
    </source>
</evidence>
<evidence type="ECO:0000256" key="2">
    <source>
        <dbReference type="SAM" id="MobiDB-lite"/>
    </source>
</evidence>
<sequence length="196" mass="21431">MRYLVTLLLSLAVLVTAGCGWHLRSTTQVPASMKTMILDSGDPNGPLSRAVRNQLRLNNVNLLDKDTTRKDVPSLRLGTVTISQDTASVFQDGQTAEYQMVMTVNASVLIPGHDIYPISTKVYRSFFDNPQMALAKDNEQAMIVQEMYDKAAEQLIRKLTSVRAADIQATKEEATADNETAAPASTPARVSTTLSN</sequence>
<reference key="1">
    <citation type="journal article" date="2011" name="J. Bacteriol.">
        <title>Comparative genomics of 28 Salmonella enterica isolates: evidence for CRISPR-mediated adaptive sublineage evolution.</title>
        <authorList>
            <person name="Fricke W.F."/>
            <person name="Mammel M.K."/>
            <person name="McDermott P.F."/>
            <person name="Tartera C."/>
            <person name="White D.G."/>
            <person name="Leclerc J.E."/>
            <person name="Ravel J."/>
            <person name="Cebula T.A."/>
        </authorList>
    </citation>
    <scope>NUCLEOTIDE SEQUENCE [LARGE SCALE GENOMIC DNA]</scope>
    <source>
        <strain>CT_02021853</strain>
    </source>
</reference>
<feature type="signal peptide" evidence="1">
    <location>
        <begin position="1"/>
        <end position="18"/>
    </location>
</feature>
<feature type="chain" id="PRO_1000138275" description="LPS-assembly lipoprotein LptE">
    <location>
        <begin position="19"/>
        <end position="196"/>
    </location>
</feature>
<feature type="region of interest" description="Disordered" evidence="2">
    <location>
        <begin position="171"/>
        <end position="196"/>
    </location>
</feature>
<feature type="lipid moiety-binding region" description="N-palmitoyl cysteine" evidence="1">
    <location>
        <position position="19"/>
    </location>
</feature>
<feature type="lipid moiety-binding region" description="S-diacylglycerol cysteine" evidence="1">
    <location>
        <position position="19"/>
    </location>
</feature>
<accession>B5FMP3</accession>
<proteinExistence type="inferred from homology"/>
<organism>
    <name type="scientific">Salmonella dublin (strain CT_02021853)</name>
    <dbReference type="NCBI Taxonomy" id="439851"/>
    <lineage>
        <taxon>Bacteria</taxon>
        <taxon>Pseudomonadati</taxon>
        <taxon>Pseudomonadota</taxon>
        <taxon>Gammaproteobacteria</taxon>
        <taxon>Enterobacterales</taxon>
        <taxon>Enterobacteriaceae</taxon>
        <taxon>Salmonella</taxon>
    </lineage>
</organism>
<dbReference type="EMBL" id="CP001144">
    <property type="protein sequence ID" value="ACH74134.1"/>
    <property type="molecule type" value="Genomic_DNA"/>
</dbReference>
<dbReference type="RefSeq" id="WP_001269950.1">
    <property type="nucleotide sequence ID" value="NC_011205.1"/>
</dbReference>
<dbReference type="SMR" id="B5FMP3"/>
<dbReference type="KEGG" id="sed:SeD_A0750"/>
<dbReference type="HOGENOM" id="CLU_103309_1_1_6"/>
<dbReference type="Proteomes" id="UP000008322">
    <property type="component" value="Chromosome"/>
</dbReference>
<dbReference type="GO" id="GO:0009279">
    <property type="term" value="C:cell outer membrane"/>
    <property type="evidence" value="ECO:0007669"/>
    <property type="project" value="UniProtKB-SubCell"/>
</dbReference>
<dbReference type="GO" id="GO:1990351">
    <property type="term" value="C:transporter complex"/>
    <property type="evidence" value="ECO:0007669"/>
    <property type="project" value="TreeGrafter"/>
</dbReference>
<dbReference type="GO" id="GO:0001530">
    <property type="term" value="F:lipopolysaccharide binding"/>
    <property type="evidence" value="ECO:0007669"/>
    <property type="project" value="TreeGrafter"/>
</dbReference>
<dbReference type="GO" id="GO:0043165">
    <property type="term" value="P:Gram-negative-bacterium-type cell outer membrane assembly"/>
    <property type="evidence" value="ECO:0007669"/>
    <property type="project" value="UniProtKB-UniRule"/>
</dbReference>
<dbReference type="GO" id="GO:0015920">
    <property type="term" value="P:lipopolysaccharide transport"/>
    <property type="evidence" value="ECO:0007669"/>
    <property type="project" value="TreeGrafter"/>
</dbReference>
<dbReference type="FunFam" id="3.30.160.150:FF:000001">
    <property type="entry name" value="LPS-assembly lipoprotein LptE"/>
    <property type="match status" value="1"/>
</dbReference>
<dbReference type="Gene3D" id="3.30.160.150">
    <property type="entry name" value="Lipoprotein like domain"/>
    <property type="match status" value="1"/>
</dbReference>
<dbReference type="HAMAP" id="MF_01186">
    <property type="entry name" value="LPS_assembly_LptE"/>
    <property type="match status" value="1"/>
</dbReference>
<dbReference type="InterPro" id="IPR007485">
    <property type="entry name" value="LPS_assembly_LptE"/>
</dbReference>
<dbReference type="NCBIfam" id="NF008062">
    <property type="entry name" value="PRK10796.1"/>
    <property type="match status" value="1"/>
</dbReference>
<dbReference type="PANTHER" id="PTHR38098">
    <property type="entry name" value="LPS-ASSEMBLY LIPOPROTEIN LPTE"/>
    <property type="match status" value="1"/>
</dbReference>
<dbReference type="PANTHER" id="PTHR38098:SF1">
    <property type="entry name" value="LPS-ASSEMBLY LIPOPROTEIN LPTE"/>
    <property type="match status" value="1"/>
</dbReference>
<dbReference type="Pfam" id="PF04390">
    <property type="entry name" value="LptE"/>
    <property type="match status" value="1"/>
</dbReference>
<dbReference type="PROSITE" id="PS51257">
    <property type="entry name" value="PROKAR_LIPOPROTEIN"/>
    <property type="match status" value="1"/>
</dbReference>